<evidence type="ECO:0000255" key="1">
    <source>
        <dbReference type="HAMAP-Rule" id="MF_00079"/>
    </source>
</evidence>
<name>HIS1_DESOH</name>
<organism>
    <name type="scientific">Desulfosudis oleivorans (strain DSM 6200 / JCM 39069 / Hxd3)</name>
    <name type="common">Desulfococcus oleovorans</name>
    <dbReference type="NCBI Taxonomy" id="96561"/>
    <lineage>
        <taxon>Bacteria</taxon>
        <taxon>Pseudomonadati</taxon>
        <taxon>Thermodesulfobacteriota</taxon>
        <taxon>Desulfobacteria</taxon>
        <taxon>Desulfobacterales</taxon>
        <taxon>Desulfosudaceae</taxon>
        <taxon>Desulfosudis</taxon>
    </lineage>
</organism>
<comment type="function">
    <text evidence="1">Catalyzes the condensation of ATP and 5-phosphoribose 1-diphosphate to form N'-(5'-phosphoribosyl)-ATP (PR-ATP). Has a crucial role in the pathway because the rate of histidine biosynthesis seems to be controlled primarily by regulation of HisG enzymatic activity.</text>
</comment>
<comment type="catalytic activity">
    <reaction evidence="1">
        <text>1-(5-phospho-beta-D-ribosyl)-ATP + diphosphate = 5-phospho-alpha-D-ribose 1-diphosphate + ATP</text>
        <dbReference type="Rhea" id="RHEA:18473"/>
        <dbReference type="ChEBI" id="CHEBI:30616"/>
        <dbReference type="ChEBI" id="CHEBI:33019"/>
        <dbReference type="ChEBI" id="CHEBI:58017"/>
        <dbReference type="ChEBI" id="CHEBI:73183"/>
        <dbReference type="EC" id="2.4.2.17"/>
    </reaction>
</comment>
<comment type="cofactor">
    <cofactor evidence="1">
        <name>Mg(2+)</name>
        <dbReference type="ChEBI" id="CHEBI:18420"/>
    </cofactor>
</comment>
<comment type="activity regulation">
    <text evidence="1">Feedback inhibited by histidine.</text>
</comment>
<comment type="pathway">
    <text evidence="1">Amino-acid biosynthesis; L-histidine biosynthesis; L-histidine from 5-phospho-alpha-D-ribose 1-diphosphate: step 1/9.</text>
</comment>
<comment type="subcellular location">
    <subcellularLocation>
        <location evidence="1">Cytoplasm</location>
    </subcellularLocation>
</comment>
<comment type="similarity">
    <text evidence="1">Belongs to the ATP phosphoribosyltransferase family. Long subfamily.</text>
</comment>
<proteinExistence type="inferred from homology"/>
<gene>
    <name evidence="1" type="primary">hisG</name>
    <name type="ordered locus">Dole_1118</name>
</gene>
<dbReference type="EC" id="2.4.2.17" evidence="1"/>
<dbReference type="EMBL" id="CP000859">
    <property type="protein sequence ID" value="ABW66925.1"/>
    <property type="molecule type" value="Genomic_DNA"/>
</dbReference>
<dbReference type="RefSeq" id="WP_012174543.1">
    <property type="nucleotide sequence ID" value="NC_009943.1"/>
</dbReference>
<dbReference type="SMR" id="A8ZXG7"/>
<dbReference type="STRING" id="96561.Dole_1118"/>
<dbReference type="KEGG" id="dol:Dole_1118"/>
<dbReference type="eggNOG" id="COG0040">
    <property type="taxonomic scope" value="Bacteria"/>
</dbReference>
<dbReference type="HOGENOM" id="CLU_038115_1_1_7"/>
<dbReference type="OrthoDB" id="9801867at2"/>
<dbReference type="UniPathway" id="UPA00031">
    <property type="reaction ID" value="UER00006"/>
</dbReference>
<dbReference type="Proteomes" id="UP000008561">
    <property type="component" value="Chromosome"/>
</dbReference>
<dbReference type="GO" id="GO:0005737">
    <property type="term" value="C:cytoplasm"/>
    <property type="evidence" value="ECO:0007669"/>
    <property type="project" value="UniProtKB-SubCell"/>
</dbReference>
<dbReference type="GO" id="GO:0005524">
    <property type="term" value="F:ATP binding"/>
    <property type="evidence" value="ECO:0007669"/>
    <property type="project" value="UniProtKB-KW"/>
</dbReference>
<dbReference type="GO" id="GO:0003879">
    <property type="term" value="F:ATP phosphoribosyltransferase activity"/>
    <property type="evidence" value="ECO:0007669"/>
    <property type="project" value="UniProtKB-UniRule"/>
</dbReference>
<dbReference type="GO" id="GO:0000287">
    <property type="term" value="F:magnesium ion binding"/>
    <property type="evidence" value="ECO:0007669"/>
    <property type="project" value="UniProtKB-UniRule"/>
</dbReference>
<dbReference type="GO" id="GO:0000105">
    <property type="term" value="P:L-histidine biosynthetic process"/>
    <property type="evidence" value="ECO:0007669"/>
    <property type="project" value="UniProtKB-UniRule"/>
</dbReference>
<dbReference type="CDD" id="cd13593">
    <property type="entry name" value="PBP2_HisGL3"/>
    <property type="match status" value="1"/>
</dbReference>
<dbReference type="FunFam" id="3.30.70.120:FF:000002">
    <property type="entry name" value="ATP phosphoribosyltransferase"/>
    <property type="match status" value="1"/>
</dbReference>
<dbReference type="FunFam" id="3.40.190.10:FF:000258">
    <property type="entry name" value="ATP phosphoribosyltransferase"/>
    <property type="match status" value="1"/>
</dbReference>
<dbReference type="Gene3D" id="3.30.70.120">
    <property type="match status" value="1"/>
</dbReference>
<dbReference type="Gene3D" id="3.40.190.10">
    <property type="entry name" value="Periplasmic binding protein-like II"/>
    <property type="match status" value="2"/>
</dbReference>
<dbReference type="HAMAP" id="MF_00079">
    <property type="entry name" value="HisG_Long"/>
    <property type="match status" value="1"/>
</dbReference>
<dbReference type="InterPro" id="IPR020621">
    <property type="entry name" value="ATP-PRT_HisG_long"/>
</dbReference>
<dbReference type="InterPro" id="IPR013820">
    <property type="entry name" value="ATP_PRibTrfase_cat"/>
</dbReference>
<dbReference type="InterPro" id="IPR001348">
    <property type="entry name" value="ATP_PRibTrfase_HisG"/>
</dbReference>
<dbReference type="InterPro" id="IPR013115">
    <property type="entry name" value="HisG_C"/>
</dbReference>
<dbReference type="InterPro" id="IPR011322">
    <property type="entry name" value="N-reg_PII-like_a/b"/>
</dbReference>
<dbReference type="InterPro" id="IPR015867">
    <property type="entry name" value="N-reg_PII/ATP_PRibTrfase_C"/>
</dbReference>
<dbReference type="NCBIfam" id="TIGR00070">
    <property type="entry name" value="hisG"/>
    <property type="match status" value="1"/>
</dbReference>
<dbReference type="NCBIfam" id="TIGR03455">
    <property type="entry name" value="HisG_C-term"/>
    <property type="match status" value="1"/>
</dbReference>
<dbReference type="PANTHER" id="PTHR21403:SF10">
    <property type="entry name" value="ATP PHOSPHORIBOSYLTRANSFERASE"/>
    <property type="match status" value="1"/>
</dbReference>
<dbReference type="PANTHER" id="PTHR21403">
    <property type="entry name" value="ATP PHOSPHORIBOSYLTRANSFERASE ATP-PRTASE"/>
    <property type="match status" value="1"/>
</dbReference>
<dbReference type="Pfam" id="PF01634">
    <property type="entry name" value="HisG"/>
    <property type="match status" value="1"/>
</dbReference>
<dbReference type="Pfam" id="PF08029">
    <property type="entry name" value="HisG_C"/>
    <property type="match status" value="1"/>
</dbReference>
<dbReference type="SUPFAM" id="SSF54913">
    <property type="entry name" value="GlnB-like"/>
    <property type="match status" value="1"/>
</dbReference>
<dbReference type="SUPFAM" id="SSF53850">
    <property type="entry name" value="Periplasmic binding protein-like II"/>
    <property type="match status" value="1"/>
</dbReference>
<accession>A8ZXG7</accession>
<feature type="chain" id="PRO_1000202530" description="ATP phosphoribosyltransferase">
    <location>
        <begin position="1"/>
        <end position="291"/>
    </location>
</feature>
<sequence>MTQVLKFGIPKGSLQDATIALFKRCGWKINVNGRSYFPDINDPDISCALLRAQEMARNVEHGTLDAGLTGKDWIAENNSDVHVVADLVYSKASARPARWVIAVAKDSPIQKLEDLEGKTVSTELVNYTKRFFQEKKISVNVEFSWGATEAKVVSGLADAIVEITETESTIRAHSLRIIHEMMQTHTQLIANHDAWKDPFKKAKLEQIALLLKGALLGEKLVGLKMNVPHAGLDAIVNLLPSLNAPTVAPLYQSDWFAVETVVDSETVRDLIPELMAKGAQGIIEYPLNKVI</sequence>
<protein>
    <recommendedName>
        <fullName evidence="1">ATP phosphoribosyltransferase</fullName>
        <shortName evidence="1">ATP-PRT</shortName>
        <shortName evidence="1">ATP-PRTase</shortName>
        <ecNumber evidence="1">2.4.2.17</ecNumber>
    </recommendedName>
</protein>
<reference key="1">
    <citation type="submission" date="2007-10" db="EMBL/GenBank/DDBJ databases">
        <title>Complete sequence of Desulfococcus oleovorans Hxd3.</title>
        <authorList>
            <consortium name="US DOE Joint Genome Institute"/>
            <person name="Copeland A."/>
            <person name="Lucas S."/>
            <person name="Lapidus A."/>
            <person name="Barry K."/>
            <person name="Glavina del Rio T."/>
            <person name="Dalin E."/>
            <person name="Tice H."/>
            <person name="Pitluck S."/>
            <person name="Kiss H."/>
            <person name="Brettin T."/>
            <person name="Bruce D."/>
            <person name="Detter J.C."/>
            <person name="Han C."/>
            <person name="Schmutz J."/>
            <person name="Larimer F."/>
            <person name="Land M."/>
            <person name="Hauser L."/>
            <person name="Kyrpides N."/>
            <person name="Kim E."/>
            <person name="Wawrik B."/>
            <person name="Richardson P."/>
        </authorList>
    </citation>
    <scope>NUCLEOTIDE SEQUENCE [LARGE SCALE GENOMIC DNA]</scope>
    <source>
        <strain>DSM 6200 / JCM 39069 / Hxd3</strain>
    </source>
</reference>
<keyword id="KW-0028">Amino-acid biosynthesis</keyword>
<keyword id="KW-0067">ATP-binding</keyword>
<keyword id="KW-0963">Cytoplasm</keyword>
<keyword id="KW-0328">Glycosyltransferase</keyword>
<keyword id="KW-0368">Histidine biosynthesis</keyword>
<keyword id="KW-0460">Magnesium</keyword>
<keyword id="KW-0479">Metal-binding</keyword>
<keyword id="KW-0547">Nucleotide-binding</keyword>
<keyword id="KW-1185">Reference proteome</keyword>
<keyword id="KW-0808">Transferase</keyword>